<reference key="1">
    <citation type="journal article" date="1999" name="Nature">
        <title>Sequence and analysis of chromosome 4 of the plant Arabidopsis thaliana.</title>
        <authorList>
            <person name="Mayer K.F.X."/>
            <person name="Schueller C."/>
            <person name="Wambutt R."/>
            <person name="Murphy G."/>
            <person name="Volckaert G."/>
            <person name="Pohl T."/>
            <person name="Duesterhoeft A."/>
            <person name="Stiekema W."/>
            <person name="Entian K.-D."/>
            <person name="Terryn N."/>
            <person name="Harris B."/>
            <person name="Ansorge W."/>
            <person name="Brandt P."/>
            <person name="Grivell L.A."/>
            <person name="Rieger M."/>
            <person name="Weichselgartner M."/>
            <person name="de Simone V."/>
            <person name="Obermaier B."/>
            <person name="Mache R."/>
            <person name="Mueller M."/>
            <person name="Kreis M."/>
            <person name="Delseny M."/>
            <person name="Puigdomenech P."/>
            <person name="Watson M."/>
            <person name="Schmidtheini T."/>
            <person name="Reichert B."/>
            <person name="Portetelle D."/>
            <person name="Perez-Alonso M."/>
            <person name="Boutry M."/>
            <person name="Bancroft I."/>
            <person name="Vos P."/>
            <person name="Hoheisel J."/>
            <person name="Zimmermann W."/>
            <person name="Wedler H."/>
            <person name="Ridley P."/>
            <person name="Langham S.-A."/>
            <person name="McCullagh B."/>
            <person name="Bilham L."/>
            <person name="Robben J."/>
            <person name="van der Schueren J."/>
            <person name="Grymonprez B."/>
            <person name="Chuang Y.-J."/>
            <person name="Vandenbussche F."/>
            <person name="Braeken M."/>
            <person name="Weltjens I."/>
            <person name="Voet M."/>
            <person name="Bastiaens I."/>
            <person name="Aert R."/>
            <person name="Defoor E."/>
            <person name="Weitzenegger T."/>
            <person name="Bothe G."/>
            <person name="Ramsperger U."/>
            <person name="Hilbert H."/>
            <person name="Braun M."/>
            <person name="Holzer E."/>
            <person name="Brandt A."/>
            <person name="Peters S."/>
            <person name="van Staveren M."/>
            <person name="Dirkse W."/>
            <person name="Mooijman P."/>
            <person name="Klein Lankhorst R."/>
            <person name="Rose M."/>
            <person name="Hauf J."/>
            <person name="Koetter P."/>
            <person name="Berneiser S."/>
            <person name="Hempel S."/>
            <person name="Feldpausch M."/>
            <person name="Lamberth S."/>
            <person name="Van den Daele H."/>
            <person name="De Keyser A."/>
            <person name="Buysshaert C."/>
            <person name="Gielen J."/>
            <person name="Villarroel R."/>
            <person name="De Clercq R."/>
            <person name="van Montagu M."/>
            <person name="Rogers J."/>
            <person name="Cronin A."/>
            <person name="Quail M.A."/>
            <person name="Bray-Allen S."/>
            <person name="Clark L."/>
            <person name="Doggett J."/>
            <person name="Hall S."/>
            <person name="Kay M."/>
            <person name="Lennard N."/>
            <person name="McLay K."/>
            <person name="Mayes R."/>
            <person name="Pettett A."/>
            <person name="Rajandream M.A."/>
            <person name="Lyne M."/>
            <person name="Benes V."/>
            <person name="Rechmann S."/>
            <person name="Borkova D."/>
            <person name="Bloecker H."/>
            <person name="Scharfe M."/>
            <person name="Grimm M."/>
            <person name="Loehnert T.-H."/>
            <person name="Dose S."/>
            <person name="de Haan M."/>
            <person name="Maarse A.C."/>
            <person name="Schaefer M."/>
            <person name="Mueller-Auer S."/>
            <person name="Gabel C."/>
            <person name="Fuchs M."/>
            <person name="Fartmann B."/>
            <person name="Granderath K."/>
            <person name="Dauner D."/>
            <person name="Herzl A."/>
            <person name="Neumann S."/>
            <person name="Argiriou A."/>
            <person name="Vitale D."/>
            <person name="Liguori R."/>
            <person name="Piravandi E."/>
            <person name="Massenet O."/>
            <person name="Quigley F."/>
            <person name="Clabauld G."/>
            <person name="Muendlein A."/>
            <person name="Felber R."/>
            <person name="Schnabl S."/>
            <person name="Hiller R."/>
            <person name="Schmidt W."/>
            <person name="Lecharny A."/>
            <person name="Aubourg S."/>
            <person name="Chefdor F."/>
            <person name="Cooke R."/>
            <person name="Berger C."/>
            <person name="Monfort A."/>
            <person name="Casacuberta E."/>
            <person name="Gibbons T."/>
            <person name="Weber N."/>
            <person name="Vandenbol M."/>
            <person name="Bargues M."/>
            <person name="Terol J."/>
            <person name="Torres A."/>
            <person name="Perez-Perez A."/>
            <person name="Purnelle B."/>
            <person name="Bent E."/>
            <person name="Johnson S."/>
            <person name="Tacon D."/>
            <person name="Jesse T."/>
            <person name="Heijnen L."/>
            <person name="Schwarz S."/>
            <person name="Scholler P."/>
            <person name="Heber S."/>
            <person name="Francs P."/>
            <person name="Bielke C."/>
            <person name="Frishman D."/>
            <person name="Haase D."/>
            <person name="Lemcke K."/>
            <person name="Mewes H.-W."/>
            <person name="Stocker S."/>
            <person name="Zaccaria P."/>
            <person name="Bevan M."/>
            <person name="Wilson R.K."/>
            <person name="de la Bastide M."/>
            <person name="Habermann K."/>
            <person name="Parnell L."/>
            <person name="Dedhia N."/>
            <person name="Gnoj L."/>
            <person name="Schutz K."/>
            <person name="Huang E."/>
            <person name="Spiegel L."/>
            <person name="Sekhon M."/>
            <person name="Murray J."/>
            <person name="Sheet P."/>
            <person name="Cordes M."/>
            <person name="Abu-Threideh J."/>
            <person name="Stoneking T."/>
            <person name="Kalicki J."/>
            <person name="Graves T."/>
            <person name="Harmon G."/>
            <person name="Edwards J."/>
            <person name="Latreille P."/>
            <person name="Courtney L."/>
            <person name="Cloud J."/>
            <person name="Abbott A."/>
            <person name="Scott K."/>
            <person name="Johnson D."/>
            <person name="Minx P."/>
            <person name="Bentley D."/>
            <person name="Fulton B."/>
            <person name="Miller N."/>
            <person name="Greco T."/>
            <person name="Kemp K."/>
            <person name="Kramer J."/>
            <person name="Fulton L."/>
            <person name="Mardis E."/>
            <person name="Dante M."/>
            <person name="Pepin K."/>
            <person name="Hillier L.W."/>
            <person name="Nelson J."/>
            <person name="Spieth J."/>
            <person name="Ryan E."/>
            <person name="Andrews S."/>
            <person name="Geisel C."/>
            <person name="Layman D."/>
            <person name="Du H."/>
            <person name="Ali J."/>
            <person name="Berghoff A."/>
            <person name="Jones K."/>
            <person name="Drone K."/>
            <person name="Cotton M."/>
            <person name="Joshu C."/>
            <person name="Antonoiu B."/>
            <person name="Zidanic M."/>
            <person name="Strong C."/>
            <person name="Sun H."/>
            <person name="Lamar B."/>
            <person name="Yordan C."/>
            <person name="Ma P."/>
            <person name="Zhong J."/>
            <person name="Preston R."/>
            <person name="Vil D."/>
            <person name="Shekher M."/>
            <person name="Matero A."/>
            <person name="Shah R."/>
            <person name="Swaby I.K."/>
            <person name="O'Shaughnessy A."/>
            <person name="Rodriguez M."/>
            <person name="Hoffman J."/>
            <person name="Till S."/>
            <person name="Granat S."/>
            <person name="Shohdy N."/>
            <person name="Hasegawa A."/>
            <person name="Hameed A."/>
            <person name="Lodhi M."/>
            <person name="Johnson A."/>
            <person name="Chen E."/>
            <person name="Marra M.A."/>
            <person name="Martienssen R."/>
            <person name="McCombie W.R."/>
        </authorList>
    </citation>
    <scope>NUCLEOTIDE SEQUENCE [LARGE SCALE GENOMIC DNA]</scope>
    <source>
        <strain>cv. Columbia</strain>
    </source>
</reference>
<reference key="2">
    <citation type="journal article" date="2017" name="Plant J.">
        <title>Araport11: a complete reannotation of the Arabidopsis thaliana reference genome.</title>
        <authorList>
            <person name="Cheng C.Y."/>
            <person name="Krishnakumar V."/>
            <person name="Chan A.P."/>
            <person name="Thibaud-Nissen F."/>
            <person name="Schobel S."/>
            <person name="Town C.D."/>
        </authorList>
    </citation>
    <scope>GENOME REANNOTATION</scope>
    <source>
        <strain>cv. Columbia</strain>
    </source>
</reference>
<reference key="3">
    <citation type="journal article" date="2003" name="Science">
        <title>Empirical analysis of transcriptional activity in the Arabidopsis genome.</title>
        <authorList>
            <person name="Yamada K."/>
            <person name="Lim J."/>
            <person name="Dale J.M."/>
            <person name="Chen H."/>
            <person name="Shinn P."/>
            <person name="Palm C.J."/>
            <person name="Southwick A.M."/>
            <person name="Wu H.C."/>
            <person name="Kim C.J."/>
            <person name="Nguyen M."/>
            <person name="Pham P.K."/>
            <person name="Cheuk R.F."/>
            <person name="Karlin-Newmann G."/>
            <person name="Liu S.X."/>
            <person name="Lam B."/>
            <person name="Sakano H."/>
            <person name="Wu T."/>
            <person name="Yu G."/>
            <person name="Miranda M."/>
            <person name="Quach H.L."/>
            <person name="Tripp M."/>
            <person name="Chang C.H."/>
            <person name="Lee J.M."/>
            <person name="Toriumi M.J."/>
            <person name="Chan M.M."/>
            <person name="Tang C.C."/>
            <person name="Onodera C.S."/>
            <person name="Deng J.M."/>
            <person name="Akiyama K."/>
            <person name="Ansari Y."/>
            <person name="Arakawa T."/>
            <person name="Banh J."/>
            <person name="Banno F."/>
            <person name="Bowser L."/>
            <person name="Brooks S.Y."/>
            <person name="Carninci P."/>
            <person name="Chao Q."/>
            <person name="Choy N."/>
            <person name="Enju A."/>
            <person name="Goldsmith A.D."/>
            <person name="Gurjal M."/>
            <person name="Hansen N.F."/>
            <person name="Hayashizaki Y."/>
            <person name="Johnson-Hopson C."/>
            <person name="Hsuan V.W."/>
            <person name="Iida K."/>
            <person name="Karnes M."/>
            <person name="Khan S."/>
            <person name="Koesema E."/>
            <person name="Ishida J."/>
            <person name="Jiang P.X."/>
            <person name="Jones T."/>
            <person name="Kawai J."/>
            <person name="Kamiya A."/>
            <person name="Meyers C."/>
            <person name="Nakajima M."/>
            <person name="Narusaka M."/>
            <person name="Seki M."/>
            <person name="Sakurai T."/>
            <person name="Satou M."/>
            <person name="Tamse R."/>
            <person name="Vaysberg M."/>
            <person name="Wallender E.K."/>
            <person name="Wong C."/>
            <person name="Yamamura Y."/>
            <person name="Yuan S."/>
            <person name="Shinozaki K."/>
            <person name="Davis R.W."/>
            <person name="Theologis A."/>
            <person name="Ecker J.R."/>
        </authorList>
    </citation>
    <scope>NUCLEOTIDE SEQUENCE [LARGE SCALE MRNA]</scope>
    <source>
        <strain>cv. Columbia</strain>
    </source>
</reference>
<reference key="4">
    <citation type="journal article" date="2015" name="Plant J.">
        <title>DOWNY MILDEW RESISTANT 6 and DMR6-LIKE OXYGENASE 1 are partially redundant but distinct suppressors of immunity in Arabidopsis.</title>
        <authorList>
            <person name="Zeilmaker T."/>
            <person name="Ludwig N.R."/>
            <person name="Elberse J."/>
            <person name="Seidl M.F."/>
            <person name="Berke L."/>
            <person name="Van Doorn A."/>
            <person name="Schuurink R.C."/>
            <person name="Snel B."/>
            <person name="Van den Ackerveken G."/>
        </authorList>
    </citation>
    <scope>FUNCTION</scope>
    <scope>FUNCTION (MICROBIAL INFECTION)</scope>
    <scope>GENE FAMILY</scope>
    <source>
        <strain>cv. Columbia</strain>
        <strain>cv. Landsberg erecta</strain>
    </source>
</reference>
<organism>
    <name type="scientific">Arabidopsis thaliana</name>
    <name type="common">Mouse-ear cress</name>
    <dbReference type="NCBI Taxonomy" id="3702"/>
    <lineage>
        <taxon>Eukaryota</taxon>
        <taxon>Viridiplantae</taxon>
        <taxon>Streptophyta</taxon>
        <taxon>Embryophyta</taxon>
        <taxon>Tracheophyta</taxon>
        <taxon>Spermatophyta</taxon>
        <taxon>Magnoliopsida</taxon>
        <taxon>eudicotyledons</taxon>
        <taxon>Gunneridae</taxon>
        <taxon>Pentapetalae</taxon>
        <taxon>rosids</taxon>
        <taxon>malvids</taxon>
        <taxon>Brassicales</taxon>
        <taxon>Brassicaceae</taxon>
        <taxon>Camelineae</taxon>
        <taxon>Arabidopsis</taxon>
    </lineage>
</organism>
<feature type="chain" id="PRO_0000435629" description="Protein DMR6-LIKE OXYGENASE 2">
    <location>
        <begin position="1"/>
        <end position="348"/>
    </location>
</feature>
<feature type="domain" description="Fe2OG dioxygenase" evidence="2">
    <location>
        <begin position="194"/>
        <end position="294"/>
    </location>
</feature>
<feature type="binding site" evidence="2">
    <location>
        <position position="219"/>
    </location>
    <ligand>
        <name>Fe cation</name>
        <dbReference type="ChEBI" id="CHEBI:24875"/>
    </ligand>
</feature>
<feature type="binding site" evidence="2">
    <location>
        <position position="221"/>
    </location>
    <ligand>
        <name>Fe cation</name>
        <dbReference type="ChEBI" id="CHEBI:24875"/>
    </ligand>
</feature>
<feature type="binding site" evidence="2">
    <location>
        <position position="275"/>
    </location>
    <ligand>
        <name>Fe cation</name>
        <dbReference type="ChEBI" id="CHEBI:24875"/>
    </ligand>
</feature>
<feature type="binding site" evidence="2">
    <location>
        <position position="285"/>
    </location>
    <ligand>
        <name>2-oxoglutarate</name>
        <dbReference type="ChEBI" id="CHEBI:16810"/>
    </ligand>
</feature>
<name>DLO2_ARATH</name>
<comment type="function">
    <text evidence="1 3">Converts salicylic acid (SA) to 2,3-dihydroxybenzoic acid (2,3-DHBA) (By similarity). Negative regulator of defense against Hyaloperonospora arabidopsidis (PubMed:25376907).</text>
</comment>
<comment type="function">
    <text evidence="3">(Microbial infection) Confers susceptibility to the downy mildew pathogen Hyaloperonospora arabidopsidis.</text>
</comment>
<comment type="catalytic activity">
    <reaction evidence="1">
        <text>salicylate + NADH + O2 + H(+) = 2,3-dihydroxybenzoate + NAD(+) + H2O</text>
        <dbReference type="Rhea" id="RHEA:51792"/>
        <dbReference type="ChEBI" id="CHEBI:15377"/>
        <dbReference type="ChEBI" id="CHEBI:15378"/>
        <dbReference type="ChEBI" id="CHEBI:15379"/>
        <dbReference type="ChEBI" id="CHEBI:30762"/>
        <dbReference type="ChEBI" id="CHEBI:36654"/>
        <dbReference type="ChEBI" id="CHEBI:57540"/>
        <dbReference type="ChEBI" id="CHEBI:57945"/>
    </reaction>
</comment>
<comment type="cofactor">
    <cofactor evidence="2">
        <name>Fe(2+)</name>
        <dbReference type="ChEBI" id="CHEBI:29033"/>
    </cofactor>
    <text evidence="2">Binds 1 Fe(2+) ion per subunit.</text>
</comment>
<comment type="similarity">
    <text evidence="5">Belongs to the iron/ascorbate-dependent oxidoreductase family.</text>
</comment>
<dbReference type="EC" id="1.14.11.-" evidence="2"/>
<dbReference type="EC" id="1.14.13.-" evidence="1"/>
<dbReference type="EMBL" id="AF118222">
    <property type="protein sequence ID" value="AAD03424.1"/>
    <property type="molecule type" value="Genomic_DNA"/>
</dbReference>
<dbReference type="EMBL" id="AL049524">
    <property type="protein sequence ID" value="CAB40042.1"/>
    <property type="molecule type" value="Genomic_DNA"/>
</dbReference>
<dbReference type="EMBL" id="AL161517">
    <property type="protein sequence ID" value="CAB78172.1"/>
    <property type="molecule type" value="Genomic_DNA"/>
</dbReference>
<dbReference type="EMBL" id="CP002687">
    <property type="protein sequence ID" value="AEE82890.1"/>
    <property type="molecule type" value="Genomic_DNA"/>
</dbReference>
<dbReference type="EMBL" id="BT003944">
    <property type="protein sequence ID" value="AAO41989.1"/>
    <property type="molecule type" value="mRNA"/>
</dbReference>
<dbReference type="EMBL" id="BT005030">
    <property type="protein sequence ID" value="AAO50563.1"/>
    <property type="molecule type" value="mRNA"/>
</dbReference>
<dbReference type="PIR" id="T04184">
    <property type="entry name" value="T04184"/>
</dbReference>
<dbReference type="RefSeq" id="NP_192787.1">
    <property type="nucleotide sequence ID" value="NM_117117.3"/>
</dbReference>
<dbReference type="SMR" id="Q9ZSA7"/>
<dbReference type="FunCoup" id="Q9ZSA7">
    <property type="interactions" value="9"/>
</dbReference>
<dbReference type="STRING" id="3702.Q9ZSA7"/>
<dbReference type="PaxDb" id="3702-AT4G10490.1"/>
<dbReference type="ProteomicsDB" id="224288"/>
<dbReference type="EnsemblPlants" id="AT4G10490.1">
    <property type="protein sequence ID" value="AT4G10490.1"/>
    <property type="gene ID" value="AT4G10490"/>
</dbReference>
<dbReference type="GeneID" id="826641"/>
<dbReference type="Gramene" id="AT4G10490.1">
    <property type="protein sequence ID" value="AT4G10490.1"/>
    <property type="gene ID" value="AT4G10490"/>
</dbReference>
<dbReference type="KEGG" id="ath:AT4G10490"/>
<dbReference type="Araport" id="AT4G10490"/>
<dbReference type="TAIR" id="AT4G10490">
    <property type="gene designation" value="DLO2"/>
</dbReference>
<dbReference type="eggNOG" id="KOG0143">
    <property type="taxonomic scope" value="Eukaryota"/>
</dbReference>
<dbReference type="HOGENOM" id="CLU_010119_16_3_1"/>
<dbReference type="InParanoid" id="Q9ZSA7"/>
<dbReference type="OMA" id="VWEGTSH"/>
<dbReference type="PhylomeDB" id="Q9ZSA7"/>
<dbReference type="BioCyc" id="ARA:AT4G10490-MONOMER"/>
<dbReference type="PRO" id="PR:Q9ZSA7"/>
<dbReference type="Proteomes" id="UP000006548">
    <property type="component" value="Chromosome 4"/>
</dbReference>
<dbReference type="ExpressionAtlas" id="Q9ZSA7">
    <property type="expression patterns" value="baseline and differential"/>
</dbReference>
<dbReference type="GO" id="GO:0051213">
    <property type="term" value="F:dioxygenase activity"/>
    <property type="evidence" value="ECO:0007669"/>
    <property type="project" value="UniProtKB-KW"/>
</dbReference>
<dbReference type="GO" id="GO:0046872">
    <property type="term" value="F:metal ion binding"/>
    <property type="evidence" value="ECO:0007669"/>
    <property type="project" value="UniProtKB-KW"/>
</dbReference>
<dbReference type="GO" id="GO:0002229">
    <property type="term" value="P:defense response to oomycetes"/>
    <property type="evidence" value="ECO:0000315"/>
    <property type="project" value="UniProtKB"/>
</dbReference>
<dbReference type="GO" id="GO:0046244">
    <property type="term" value="P:salicylic acid catabolic process"/>
    <property type="evidence" value="ECO:0000250"/>
    <property type="project" value="UniProtKB"/>
</dbReference>
<dbReference type="FunFam" id="2.60.120.330:FF:000007">
    <property type="entry name" value="Protein DMR6-like oxygenase 2"/>
    <property type="match status" value="1"/>
</dbReference>
<dbReference type="Gene3D" id="2.60.120.330">
    <property type="entry name" value="B-lactam Antibiotic, Isopenicillin N Synthase, Chain"/>
    <property type="match status" value="1"/>
</dbReference>
<dbReference type="InterPro" id="IPR026992">
    <property type="entry name" value="DIOX_N"/>
</dbReference>
<dbReference type="InterPro" id="IPR044861">
    <property type="entry name" value="IPNS-like_FE2OG_OXY"/>
</dbReference>
<dbReference type="InterPro" id="IPR027443">
    <property type="entry name" value="IPNS-like_sf"/>
</dbReference>
<dbReference type="InterPro" id="IPR005123">
    <property type="entry name" value="Oxoglu/Fe-dep_dioxygenase_dom"/>
</dbReference>
<dbReference type="InterPro" id="IPR050295">
    <property type="entry name" value="Plant_2OG-oxidoreductases"/>
</dbReference>
<dbReference type="PANTHER" id="PTHR47991">
    <property type="entry name" value="OXOGLUTARATE/IRON-DEPENDENT DIOXYGENASE"/>
    <property type="match status" value="1"/>
</dbReference>
<dbReference type="Pfam" id="PF03171">
    <property type="entry name" value="2OG-FeII_Oxy"/>
    <property type="match status" value="1"/>
</dbReference>
<dbReference type="Pfam" id="PF14226">
    <property type="entry name" value="DIOX_N"/>
    <property type="match status" value="1"/>
</dbReference>
<dbReference type="SUPFAM" id="SSF51197">
    <property type="entry name" value="Clavaminate synthase-like"/>
    <property type="match status" value="1"/>
</dbReference>
<dbReference type="PROSITE" id="PS51471">
    <property type="entry name" value="FE2OG_OXY"/>
    <property type="match status" value="1"/>
</dbReference>
<sequence length="348" mass="39282">MAASKLLVSDIASVVDHVPSNYVRPVSDRPKMSEVQTSGDSIPLIDLHDLHGPNRADIINQFAHACSSCGFFQIKNHGVPEETIKKMMNAAREFFRQSESERVKHYSADTKKTTRLSTSFNVSKEKVSNWRDFLRLHCYPIEDFINEWPSTPISFREVTAEYATSVRALVLTLLEAISESLGLAKDRVSNTIGKHGQHMAINYYPRCPQPELTYGLPGHKDANLITVLLQDEVSGLQVFKDGKWIAVNPVPNTFIVNLGDQMQVISNEKYKSVLHRAVVNSDMERISIPTFYCPSEDAVISPAQELINEEEDSPAIYRNFTYAEYFEKFWDTAFDTESCIDSFKASTA</sequence>
<proteinExistence type="evidence at transcript level"/>
<evidence type="ECO:0000250" key="1">
    <source>
        <dbReference type="UniProtKB" id="Q9ZSA8"/>
    </source>
</evidence>
<evidence type="ECO:0000255" key="2">
    <source>
        <dbReference type="PROSITE-ProRule" id="PRU00805"/>
    </source>
</evidence>
<evidence type="ECO:0000269" key="3">
    <source>
    </source>
</evidence>
<evidence type="ECO:0000303" key="4">
    <source>
    </source>
</evidence>
<evidence type="ECO:0000305" key="5"/>
<evidence type="ECO:0000312" key="6">
    <source>
        <dbReference type="Araport" id="AT4G10490"/>
    </source>
</evidence>
<evidence type="ECO:0000312" key="7">
    <source>
        <dbReference type="EMBL" id="AAD03424.1"/>
    </source>
</evidence>
<evidence type="ECO:0000312" key="8">
    <source>
        <dbReference type="EMBL" id="CAB40042.1"/>
    </source>
</evidence>
<gene>
    <name evidence="4" type="primary">DLO2</name>
    <name evidence="6" type="ordered locus">At4g10490</name>
    <name evidence="7" type="ORF">F3H7.17</name>
    <name evidence="8" type="ORF">F7L13.70</name>
</gene>
<keyword id="KW-0223">Dioxygenase</keyword>
<keyword id="KW-0408">Iron</keyword>
<keyword id="KW-0479">Metal-binding</keyword>
<keyword id="KW-0520">NAD</keyword>
<keyword id="KW-0560">Oxidoreductase</keyword>
<keyword id="KW-0611">Plant defense</keyword>
<keyword id="KW-1185">Reference proteome</keyword>
<protein>
    <recommendedName>
        <fullName evidence="4">Protein DMR6-LIKE OXYGENASE 2</fullName>
        <ecNumber evidence="2">1.14.11.-</ecNumber>
    </recommendedName>
    <alternativeName>
        <fullName evidence="4">2-oxoglutarate (2OG)-Fe(II) oxygenase-like protein DLO2</fullName>
    </alternativeName>
    <alternativeName>
        <fullName evidence="5">Salicylate 3-hydroxylase DLO2</fullName>
        <shortName evidence="5">S3H DLO2</shortName>
        <shortName evidence="5">SA 3-hydroxylase DLO2</shortName>
        <shortName evidence="5">Salicylic acid 3-hydroxylase DLO2</shortName>
        <ecNumber evidence="1">1.14.13.-</ecNumber>
    </alternativeName>
</protein>
<accession>Q9ZSA7</accession>